<gene>
    <name type="primary">hsp30a</name>
</gene>
<keyword id="KW-1185">Reference proteome</keyword>
<keyword id="KW-0346">Stress response</keyword>
<comment type="similarity">
    <text evidence="1">Belongs to the small heat shock protein (HSP20) family.</text>
</comment>
<comment type="sequence caution" evidence="3">
    <conflict type="erroneous initiation">
        <sequence resource="EMBL-CDS" id="CAA26347"/>
    </conflict>
</comment>
<proteinExistence type="inferred from homology"/>
<organism>
    <name type="scientific">Xenopus laevis</name>
    <name type="common">African clawed frog</name>
    <dbReference type="NCBI Taxonomy" id="8355"/>
    <lineage>
        <taxon>Eukaryota</taxon>
        <taxon>Metazoa</taxon>
        <taxon>Chordata</taxon>
        <taxon>Craniata</taxon>
        <taxon>Vertebrata</taxon>
        <taxon>Euteleostomi</taxon>
        <taxon>Amphibia</taxon>
        <taxon>Batrachia</taxon>
        <taxon>Anura</taxon>
        <taxon>Pipoidea</taxon>
        <taxon>Pipidae</taxon>
        <taxon>Xenopodinae</taxon>
        <taxon>Xenopus</taxon>
        <taxon>Xenopus</taxon>
    </lineage>
</organism>
<dbReference type="EMBL" id="X02511">
    <property type="protein sequence ID" value="CAA26347.1"/>
    <property type="status" value="ALT_INIT"/>
    <property type="molecule type" value="Genomic_DNA"/>
</dbReference>
<dbReference type="PIR" id="A05255">
    <property type="entry name" value="A05255"/>
</dbReference>
<dbReference type="SMR" id="P04120"/>
<dbReference type="AGR" id="Xenbase:XB-GENE-5764332"/>
<dbReference type="Xenbase" id="XB-GENE-5764332">
    <property type="gene designation" value="hsp30c.L"/>
</dbReference>
<dbReference type="Proteomes" id="UP000186698">
    <property type="component" value="Unplaced"/>
</dbReference>
<dbReference type="GO" id="GO:0005737">
    <property type="term" value="C:cytoplasm"/>
    <property type="evidence" value="ECO:0007669"/>
    <property type="project" value="TreeGrafter"/>
</dbReference>
<dbReference type="GO" id="GO:0005634">
    <property type="term" value="C:nucleus"/>
    <property type="evidence" value="ECO:0007669"/>
    <property type="project" value="TreeGrafter"/>
</dbReference>
<dbReference type="GO" id="GO:0051082">
    <property type="term" value="F:unfolded protein binding"/>
    <property type="evidence" value="ECO:0007669"/>
    <property type="project" value="TreeGrafter"/>
</dbReference>
<dbReference type="GO" id="GO:0042026">
    <property type="term" value="P:protein refolding"/>
    <property type="evidence" value="ECO:0007669"/>
    <property type="project" value="TreeGrafter"/>
</dbReference>
<dbReference type="GO" id="GO:0009408">
    <property type="term" value="P:response to heat"/>
    <property type="evidence" value="ECO:0007669"/>
    <property type="project" value="TreeGrafter"/>
</dbReference>
<dbReference type="Gene3D" id="2.60.40.790">
    <property type="match status" value="1"/>
</dbReference>
<dbReference type="InterPro" id="IPR002068">
    <property type="entry name" value="A-crystallin/Hsp20_dom"/>
</dbReference>
<dbReference type="InterPro" id="IPR001436">
    <property type="entry name" value="Alpha-crystallin/sHSP_animal"/>
</dbReference>
<dbReference type="InterPro" id="IPR008978">
    <property type="entry name" value="HSP20-like_chaperone"/>
</dbReference>
<dbReference type="PANTHER" id="PTHR45640:SF2">
    <property type="entry name" value="HEAT SHOCK PROTEIN BETA-11-RELATED"/>
    <property type="match status" value="1"/>
</dbReference>
<dbReference type="PANTHER" id="PTHR45640">
    <property type="entry name" value="HEAT SHOCK PROTEIN HSP-12.2-RELATED"/>
    <property type="match status" value="1"/>
</dbReference>
<dbReference type="Pfam" id="PF00011">
    <property type="entry name" value="HSP20"/>
    <property type="match status" value="1"/>
</dbReference>
<dbReference type="PROSITE" id="PS01031">
    <property type="entry name" value="SHSP"/>
    <property type="match status" value="1"/>
</dbReference>
<reference key="1">
    <citation type="journal article" date="1984" name="EMBO J.">
        <title>Xenopus hsp 70 genes are constitutively expressed in injected oocytes.</title>
        <authorList>
            <person name="Bienz M."/>
        </authorList>
    </citation>
    <scope>NUCLEOTIDE SEQUENCE [GENOMIC DNA]</scope>
</reference>
<name>HS30A_XENLA</name>
<sequence>MRNNVERRMQRVNEACRLLSKDTEMRRITDQNRQSRESEGTSPNSGKDGKDHFELTLNVRDFSPHELTVKTQGRRVIVTGKHERKSDTE</sequence>
<protein>
    <recommendedName>
        <fullName>Heat shock protein 30A</fullName>
    </recommendedName>
</protein>
<evidence type="ECO:0000255" key="1">
    <source>
        <dbReference type="PROSITE-ProRule" id="PRU00285"/>
    </source>
</evidence>
<evidence type="ECO:0000256" key="2">
    <source>
        <dbReference type="SAM" id="MobiDB-lite"/>
    </source>
</evidence>
<evidence type="ECO:0000305" key="3"/>
<feature type="chain" id="PRO_0000125953" description="Heat shock protein 30A">
    <location>
        <begin position="1"/>
        <end position="89"/>
    </location>
</feature>
<feature type="domain" description="sHSP" evidence="1">
    <location>
        <begin position="35"/>
        <end position="89"/>
    </location>
</feature>
<feature type="region of interest" description="Disordered" evidence="2">
    <location>
        <begin position="1"/>
        <end position="55"/>
    </location>
</feature>
<feature type="compositionally biased region" description="Basic and acidic residues" evidence="2">
    <location>
        <begin position="1"/>
        <end position="11"/>
    </location>
</feature>
<feature type="compositionally biased region" description="Basic and acidic residues" evidence="2">
    <location>
        <begin position="19"/>
        <end position="39"/>
    </location>
</feature>
<accession>P04120</accession>